<organism>
    <name type="scientific">Fusobacterium nucleatum subsp. nucleatum (strain ATCC 25586 / DSM 15643 / BCRC 10681 / CIP 101130 / JCM 8532 / KCTC 2640 / LMG 13131 / VPI 4355)</name>
    <dbReference type="NCBI Taxonomy" id="190304"/>
    <lineage>
        <taxon>Bacteria</taxon>
        <taxon>Fusobacteriati</taxon>
        <taxon>Fusobacteriota</taxon>
        <taxon>Fusobacteriia</taxon>
        <taxon>Fusobacteriales</taxon>
        <taxon>Fusobacteriaceae</taxon>
        <taxon>Fusobacterium</taxon>
    </lineage>
</organism>
<keyword id="KW-0963">Cytoplasm</keyword>
<keyword id="KW-0441">Lipid A biosynthesis</keyword>
<keyword id="KW-0444">Lipid biosynthesis</keyword>
<keyword id="KW-0443">Lipid metabolism</keyword>
<keyword id="KW-0456">Lyase</keyword>
<keyword id="KW-1185">Reference proteome</keyword>
<sequence length="141" mass="15951">MLDILEIMKRIPHRYPFLLVDRILEMDKEAQIIKGKKNVTMNEEFFNGHFPGHPIMPGVLIIEGMAQCLGVMVMENFPGKVPYFAAIENAKFKNPVKPGDTLIYDVKVDKVKRNFVKATGKTYVDDAVVAEASFTFVIADM</sequence>
<evidence type="ECO:0000255" key="1">
    <source>
        <dbReference type="HAMAP-Rule" id="MF_00406"/>
    </source>
</evidence>
<name>FABZ_FUSNN</name>
<comment type="function">
    <text evidence="1">Involved in unsaturated fatty acids biosynthesis. Catalyzes the dehydration of short chain beta-hydroxyacyl-ACPs and long chain saturated and unsaturated beta-hydroxyacyl-ACPs.</text>
</comment>
<comment type="catalytic activity">
    <reaction evidence="1">
        <text>a (3R)-hydroxyacyl-[ACP] = a (2E)-enoyl-[ACP] + H2O</text>
        <dbReference type="Rhea" id="RHEA:13097"/>
        <dbReference type="Rhea" id="RHEA-COMP:9925"/>
        <dbReference type="Rhea" id="RHEA-COMP:9945"/>
        <dbReference type="ChEBI" id="CHEBI:15377"/>
        <dbReference type="ChEBI" id="CHEBI:78784"/>
        <dbReference type="ChEBI" id="CHEBI:78827"/>
        <dbReference type="EC" id="4.2.1.59"/>
    </reaction>
</comment>
<comment type="subcellular location">
    <subcellularLocation>
        <location evidence="1">Cytoplasm</location>
    </subcellularLocation>
</comment>
<comment type="similarity">
    <text evidence="1">Belongs to the thioester dehydratase family. FabZ subfamily.</text>
</comment>
<accession>Q8R690</accession>
<dbReference type="EC" id="4.2.1.59" evidence="1"/>
<dbReference type="EMBL" id="AE009951">
    <property type="protein sequence ID" value="AAL94790.1"/>
    <property type="molecule type" value="Genomic_DNA"/>
</dbReference>
<dbReference type="RefSeq" id="NP_603491.1">
    <property type="nucleotide sequence ID" value="NC_003454.1"/>
</dbReference>
<dbReference type="RefSeq" id="WP_011016509.1">
    <property type="nucleotide sequence ID" value="NZ_OZ209243.1"/>
</dbReference>
<dbReference type="SMR" id="Q8R690"/>
<dbReference type="FunCoup" id="Q8R690">
    <property type="interactions" value="347"/>
</dbReference>
<dbReference type="STRING" id="190304.FN0594"/>
<dbReference type="PaxDb" id="190304-FN0594"/>
<dbReference type="EnsemblBacteria" id="AAL94790">
    <property type="protein sequence ID" value="AAL94790"/>
    <property type="gene ID" value="FN0594"/>
</dbReference>
<dbReference type="GeneID" id="79783593"/>
<dbReference type="KEGG" id="fnu:FN0594"/>
<dbReference type="PATRIC" id="fig|190304.8.peg.1159"/>
<dbReference type="eggNOG" id="COG0764">
    <property type="taxonomic scope" value="Bacteria"/>
</dbReference>
<dbReference type="HOGENOM" id="CLU_078912_3_0_0"/>
<dbReference type="InParanoid" id="Q8R690"/>
<dbReference type="BioCyc" id="FNUC190304:G1FZS-1181-MONOMER"/>
<dbReference type="Proteomes" id="UP000002521">
    <property type="component" value="Chromosome"/>
</dbReference>
<dbReference type="GO" id="GO:0005737">
    <property type="term" value="C:cytoplasm"/>
    <property type="evidence" value="ECO:0007669"/>
    <property type="project" value="UniProtKB-SubCell"/>
</dbReference>
<dbReference type="GO" id="GO:0016020">
    <property type="term" value="C:membrane"/>
    <property type="evidence" value="ECO:0007669"/>
    <property type="project" value="GOC"/>
</dbReference>
<dbReference type="GO" id="GO:0019171">
    <property type="term" value="F:(3R)-hydroxyacyl-[acyl-carrier-protein] dehydratase activity"/>
    <property type="evidence" value="ECO:0007669"/>
    <property type="project" value="UniProtKB-EC"/>
</dbReference>
<dbReference type="GO" id="GO:0006633">
    <property type="term" value="P:fatty acid biosynthetic process"/>
    <property type="evidence" value="ECO:0007669"/>
    <property type="project" value="UniProtKB-UniRule"/>
</dbReference>
<dbReference type="GO" id="GO:0009245">
    <property type="term" value="P:lipid A biosynthetic process"/>
    <property type="evidence" value="ECO:0007669"/>
    <property type="project" value="UniProtKB-UniRule"/>
</dbReference>
<dbReference type="CDD" id="cd01288">
    <property type="entry name" value="FabZ"/>
    <property type="match status" value="1"/>
</dbReference>
<dbReference type="FunFam" id="3.10.129.10:FF:000001">
    <property type="entry name" value="3-hydroxyacyl-[acyl-carrier-protein] dehydratase FabZ"/>
    <property type="match status" value="1"/>
</dbReference>
<dbReference type="Gene3D" id="3.10.129.10">
    <property type="entry name" value="Hotdog Thioesterase"/>
    <property type="match status" value="1"/>
</dbReference>
<dbReference type="HAMAP" id="MF_00406">
    <property type="entry name" value="FabZ"/>
    <property type="match status" value="1"/>
</dbReference>
<dbReference type="InterPro" id="IPR013114">
    <property type="entry name" value="FabA_FabZ"/>
</dbReference>
<dbReference type="InterPro" id="IPR010084">
    <property type="entry name" value="FabZ"/>
</dbReference>
<dbReference type="InterPro" id="IPR029069">
    <property type="entry name" value="HotDog_dom_sf"/>
</dbReference>
<dbReference type="NCBIfam" id="TIGR01750">
    <property type="entry name" value="fabZ"/>
    <property type="match status" value="1"/>
</dbReference>
<dbReference type="NCBIfam" id="NF000582">
    <property type="entry name" value="PRK00006.1"/>
    <property type="match status" value="1"/>
</dbReference>
<dbReference type="PANTHER" id="PTHR30272">
    <property type="entry name" value="3-HYDROXYACYL-[ACYL-CARRIER-PROTEIN] DEHYDRATASE"/>
    <property type="match status" value="1"/>
</dbReference>
<dbReference type="PANTHER" id="PTHR30272:SF1">
    <property type="entry name" value="3-HYDROXYACYL-[ACYL-CARRIER-PROTEIN] DEHYDRATASE"/>
    <property type="match status" value="1"/>
</dbReference>
<dbReference type="Pfam" id="PF07977">
    <property type="entry name" value="FabA"/>
    <property type="match status" value="1"/>
</dbReference>
<dbReference type="SUPFAM" id="SSF54637">
    <property type="entry name" value="Thioesterase/thiol ester dehydrase-isomerase"/>
    <property type="match status" value="1"/>
</dbReference>
<reference key="1">
    <citation type="journal article" date="2002" name="J. Bacteriol.">
        <title>Genome sequence and analysis of the oral bacterium Fusobacterium nucleatum strain ATCC 25586.</title>
        <authorList>
            <person name="Kapatral V."/>
            <person name="Anderson I."/>
            <person name="Ivanova N."/>
            <person name="Reznik G."/>
            <person name="Los T."/>
            <person name="Lykidis A."/>
            <person name="Bhattacharyya A."/>
            <person name="Bartman A."/>
            <person name="Gardner W."/>
            <person name="Grechkin G."/>
            <person name="Zhu L."/>
            <person name="Vasieva O."/>
            <person name="Chu L."/>
            <person name="Kogan Y."/>
            <person name="Chaga O."/>
            <person name="Goltsman E."/>
            <person name="Bernal A."/>
            <person name="Larsen N."/>
            <person name="D'Souza M."/>
            <person name="Walunas T."/>
            <person name="Pusch G."/>
            <person name="Haselkorn R."/>
            <person name="Fonstein M."/>
            <person name="Kyrpides N.C."/>
            <person name="Overbeek R."/>
        </authorList>
    </citation>
    <scope>NUCLEOTIDE SEQUENCE [LARGE SCALE GENOMIC DNA]</scope>
    <source>
        <strain>ATCC 25586 / DSM 15643 / BCRC 10681 / CIP 101130 / JCM 8532 / KCTC 2640 / LMG 13131 / VPI 4355</strain>
    </source>
</reference>
<feature type="chain" id="PRO_0000091680" description="3-hydroxyacyl-[acyl-carrier-protein] dehydratase FabZ">
    <location>
        <begin position="1"/>
        <end position="141"/>
    </location>
</feature>
<feature type="active site" evidence="1">
    <location>
        <position position="49"/>
    </location>
</feature>
<gene>
    <name evidence="1" type="primary">fabZ</name>
    <name type="ordered locus">FN0594</name>
</gene>
<protein>
    <recommendedName>
        <fullName evidence="1">3-hydroxyacyl-[acyl-carrier-protein] dehydratase FabZ</fullName>
        <ecNumber evidence="1">4.2.1.59</ecNumber>
    </recommendedName>
    <alternativeName>
        <fullName evidence="1">(3R)-hydroxymyristoyl-[acyl-carrier-protein] dehydratase</fullName>
        <shortName evidence="1">(3R)-hydroxymyristoyl-ACP dehydrase</shortName>
    </alternativeName>
    <alternativeName>
        <fullName evidence="1">Beta-hydroxyacyl-ACP dehydratase</fullName>
    </alternativeName>
</protein>
<proteinExistence type="inferred from homology"/>